<proteinExistence type="inferred from homology"/>
<comment type="cofactor">
    <cofactor evidence="1">
        <name>Mo-molybdopterin</name>
        <dbReference type="ChEBI" id="CHEBI:71302"/>
    </cofactor>
    <text evidence="1">Binds 1 Mo-molybdopterin (Mo-MPT) cofactor per subunit.</text>
</comment>
<protein>
    <recommendedName>
        <fullName>Uncharacterized oxidoreductase YuiH</fullName>
        <ecNumber>1.-.-.-</ecNumber>
    </recommendedName>
</protein>
<name>YUIH_BACSU</name>
<gene>
    <name type="primary">yuiH</name>
    <name type="ordered locus">BSU32020</name>
</gene>
<organism>
    <name type="scientific">Bacillus subtilis (strain 168)</name>
    <dbReference type="NCBI Taxonomy" id="224308"/>
    <lineage>
        <taxon>Bacteria</taxon>
        <taxon>Bacillati</taxon>
        <taxon>Bacillota</taxon>
        <taxon>Bacilli</taxon>
        <taxon>Bacillales</taxon>
        <taxon>Bacillaceae</taxon>
        <taxon>Bacillus</taxon>
    </lineage>
</organism>
<evidence type="ECO:0000250" key="1"/>
<evidence type="ECO:0000256" key="2">
    <source>
        <dbReference type="SAM" id="MobiDB-lite"/>
    </source>
</evidence>
<accession>O32103</accession>
<reference key="1">
    <citation type="journal article" date="1997" name="Nature">
        <title>The complete genome sequence of the Gram-positive bacterium Bacillus subtilis.</title>
        <authorList>
            <person name="Kunst F."/>
            <person name="Ogasawara N."/>
            <person name="Moszer I."/>
            <person name="Albertini A.M."/>
            <person name="Alloni G."/>
            <person name="Azevedo V."/>
            <person name="Bertero M.G."/>
            <person name="Bessieres P."/>
            <person name="Bolotin A."/>
            <person name="Borchert S."/>
            <person name="Borriss R."/>
            <person name="Boursier L."/>
            <person name="Brans A."/>
            <person name="Braun M."/>
            <person name="Brignell S.C."/>
            <person name="Bron S."/>
            <person name="Brouillet S."/>
            <person name="Bruschi C.V."/>
            <person name="Caldwell B."/>
            <person name="Capuano V."/>
            <person name="Carter N.M."/>
            <person name="Choi S.-K."/>
            <person name="Codani J.-J."/>
            <person name="Connerton I.F."/>
            <person name="Cummings N.J."/>
            <person name="Daniel R.A."/>
            <person name="Denizot F."/>
            <person name="Devine K.M."/>
            <person name="Duesterhoeft A."/>
            <person name="Ehrlich S.D."/>
            <person name="Emmerson P.T."/>
            <person name="Entian K.-D."/>
            <person name="Errington J."/>
            <person name="Fabret C."/>
            <person name="Ferrari E."/>
            <person name="Foulger D."/>
            <person name="Fritz C."/>
            <person name="Fujita M."/>
            <person name="Fujita Y."/>
            <person name="Fuma S."/>
            <person name="Galizzi A."/>
            <person name="Galleron N."/>
            <person name="Ghim S.-Y."/>
            <person name="Glaser P."/>
            <person name="Goffeau A."/>
            <person name="Golightly E.J."/>
            <person name="Grandi G."/>
            <person name="Guiseppi G."/>
            <person name="Guy B.J."/>
            <person name="Haga K."/>
            <person name="Haiech J."/>
            <person name="Harwood C.R."/>
            <person name="Henaut A."/>
            <person name="Hilbert H."/>
            <person name="Holsappel S."/>
            <person name="Hosono S."/>
            <person name="Hullo M.-F."/>
            <person name="Itaya M."/>
            <person name="Jones L.-M."/>
            <person name="Joris B."/>
            <person name="Karamata D."/>
            <person name="Kasahara Y."/>
            <person name="Klaerr-Blanchard M."/>
            <person name="Klein C."/>
            <person name="Kobayashi Y."/>
            <person name="Koetter P."/>
            <person name="Koningstein G."/>
            <person name="Krogh S."/>
            <person name="Kumano M."/>
            <person name="Kurita K."/>
            <person name="Lapidus A."/>
            <person name="Lardinois S."/>
            <person name="Lauber J."/>
            <person name="Lazarevic V."/>
            <person name="Lee S.-M."/>
            <person name="Levine A."/>
            <person name="Liu H."/>
            <person name="Masuda S."/>
            <person name="Mauel C."/>
            <person name="Medigue C."/>
            <person name="Medina N."/>
            <person name="Mellado R.P."/>
            <person name="Mizuno M."/>
            <person name="Moestl D."/>
            <person name="Nakai S."/>
            <person name="Noback M."/>
            <person name="Noone D."/>
            <person name="O'Reilly M."/>
            <person name="Ogawa K."/>
            <person name="Ogiwara A."/>
            <person name="Oudega B."/>
            <person name="Park S.-H."/>
            <person name="Parro V."/>
            <person name="Pohl T.M."/>
            <person name="Portetelle D."/>
            <person name="Porwollik S."/>
            <person name="Prescott A.M."/>
            <person name="Presecan E."/>
            <person name="Pujic P."/>
            <person name="Purnelle B."/>
            <person name="Rapoport G."/>
            <person name="Rey M."/>
            <person name="Reynolds S."/>
            <person name="Rieger M."/>
            <person name="Rivolta C."/>
            <person name="Rocha E."/>
            <person name="Roche B."/>
            <person name="Rose M."/>
            <person name="Sadaie Y."/>
            <person name="Sato T."/>
            <person name="Scanlan E."/>
            <person name="Schleich S."/>
            <person name="Schroeter R."/>
            <person name="Scoffone F."/>
            <person name="Sekiguchi J."/>
            <person name="Sekowska A."/>
            <person name="Seror S.J."/>
            <person name="Serror P."/>
            <person name="Shin B.-S."/>
            <person name="Soldo B."/>
            <person name="Sorokin A."/>
            <person name="Tacconi E."/>
            <person name="Takagi T."/>
            <person name="Takahashi H."/>
            <person name="Takemaru K."/>
            <person name="Takeuchi M."/>
            <person name="Tamakoshi A."/>
            <person name="Tanaka T."/>
            <person name="Terpstra P."/>
            <person name="Tognoni A."/>
            <person name="Tosato V."/>
            <person name="Uchiyama S."/>
            <person name="Vandenbol M."/>
            <person name="Vannier F."/>
            <person name="Vassarotti A."/>
            <person name="Viari A."/>
            <person name="Wambutt R."/>
            <person name="Wedler E."/>
            <person name="Wedler H."/>
            <person name="Weitzenegger T."/>
            <person name="Winters P."/>
            <person name="Wipat A."/>
            <person name="Yamamoto H."/>
            <person name="Yamane K."/>
            <person name="Yasumoto K."/>
            <person name="Yata K."/>
            <person name="Yoshida K."/>
            <person name="Yoshikawa H.-F."/>
            <person name="Zumstein E."/>
            <person name="Yoshikawa H."/>
            <person name="Danchin A."/>
        </authorList>
    </citation>
    <scope>NUCLEOTIDE SEQUENCE [LARGE SCALE GENOMIC DNA]</scope>
    <source>
        <strain>168</strain>
    </source>
</reference>
<feature type="chain" id="PRO_0000392200" description="Uncharacterized oxidoreductase YuiH">
    <location>
        <begin position="1"/>
        <end position="198"/>
    </location>
</feature>
<feature type="region of interest" description="Disordered" evidence="2">
    <location>
        <begin position="1"/>
        <end position="23"/>
    </location>
</feature>
<feature type="compositionally biased region" description="Polar residues" evidence="2">
    <location>
        <begin position="9"/>
        <end position="23"/>
    </location>
</feature>
<feature type="binding site" evidence="1">
    <location>
        <position position="75"/>
    </location>
    <ligand>
        <name>Mo-molybdopterin</name>
        <dbReference type="ChEBI" id="CHEBI:71302"/>
    </ligand>
    <ligandPart>
        <name>Mo</name>
        <dbReference type="ChEBI" id="CHEBI:28685"/>
    </ligandPart>
</feature>
<feature type="binding site" evidence="1">
    <location>
        <position position="144"/>
    </location>
    <ligand>
        <name>Mo-molybdopterin</name>
        <dbReference type="ChEBI" id="CHEBI:71302"/>
    </ligand>
</feature>
<feature type="binding site" evidence="1">
    <location>
        <position position="149"/>
    </location>
    <ligand>
        <name>Mo-molybdopterin</name>
        <dbReference type="ChEBI" id="CHEBI:71302"/>
    </ligand>
</feature>
<keyword id="KW-0479">Metal-binding</keyword>
<keyword id="KW-0500">Molybdenum</keyword>
<keyword id="KW-0560">Oxidoreductase</keyword>
<keyword id="KW-1185">Reference proteome</keyword>
<sequence length="198" mass="23036">MYFGKTRQSDQSGRVPPNQNVTTSFPVLHTGDVPYYEDMTKWNLQVYGLVDHPMLLSFEDVKAFPRYESKNDIHCVTGWSRLDNVWQGVRACDIAEKAGVKEEAGYVILHAEEGWTTNLPLDDFLAETSLLAYAHNGEPLTPEHGFPLRGVFPHLYFWKSAKWLRGIQFTKENHPGFWERNGYHMRGDPWQNQRFTWD</sequence>
<dbReference type="EC" id="1.-.-.-"/>
<dbReference type="EMBL" id="AL009126">
    <property type="protein sequence ID" value="CAB15192.1"/>
    <property type="molecule type" value="Genomic_DNA"/>
</dbReference>
<dbReference type="PIR" id="A70013">
    <property type="entry name" value="A70013"/>
</dbReference>
<dbReference type="RefSeq" id="NP_391082.1">
    <property type="nucleotide sequence ID" value="NC_000964.3"/>
</dbReference>
<dbReference type="RefSeq" id="WP_003228739.1">
    <property type="nucleotide sequence ID" value="NZ_OZ025638.1"/>
</dbReference>
<dbReference type="SMR" id="O32103"/>
<dbReference type="FunCoup" id="O32103">
    <property type="interactions" value="139"/>
</dbReference>
<dbReference type="STRING" id="224308.BSU32020"/>
<dbReference type="PaxDb" id="224308-BSU32020"/>
<dbReference type="EnsemblBacteria" id="CAB15192">
    <property type="protein sequence ID" value="CAB15192"/>
    <property type="gene ID" value="BSU_32020"/>
</dbReference>
<dbReference type="GeneID" id="937188"/>
<dbReference type="KEGG" id="bsu:BSU32020"/>
<dbReference type="PATRIC" id="fig|224308.179.peg.3468"/>
<dbReference type="eggNOG" id="COG2041">
    <property type="taxonomic scope" value="Bacteria"/>
</dbReference>
<dbReference type="InParanoid" id="O32103"/>
<dbReference type="OrthoDB" id="9778777at2"/>
<dbReference type="PhylomeDB" id="O32103"/>
<dbReference type="BioCyc" id="BSUB:BSU32020-MONOMER"/>
<dbReference type="Proteomes" id="UP000001570">
    <property type="component" value="Chromosome"/>
</dbReference>
<dbReference type="GO" id="GO:0046872">
    <property type="term" value="F:metal ion binding"/>
    <property type="evidence" value="ECO:0007669"/>
    <property type="project" value="UniProtKB-KW"/>
</dbReference>
<dbReference type="GO" id="GO:0016491">
    <property type="term" value="F:oxidoreductase activity"/>
    <property type="evidence" value="ECO:0007669"/>
    <property type="project" value="UniProtKB-KW"/>
</dbReference>
<dbReference type="CDD" id="cd02109">
    <property type="entry name" value="arch_bact_SO_family_Moco"/>
    <property type="match status" value="1"/>
</dbReference>
<dbReference type="Gene3D" id="3.90.420.10">
    <property type="entry name" value="Oxidoreductase, molybdopterin-binding domain"/>
    <property type="match status" value="1"/>
</dbReference>
<dbReference type="InterPro" id="IPR000572">
    <property type="entry name" value="OxRdtase_Mopterin-bd_dom"/>
</dbReference>
<dbReference type="InterPro" id="IPR036374">
    <property type="entry name" value="OxRdtase_Mopterin-bd_sf"/>
</dbReference>
<dbReference type="PANTHER" id="PTHR43032:SF4">
    <property type="entry name" value="OXIDOREDUCTASE MOLYBDOPTERIN-BINDING DOMAIN-CONTAINING PROTEIN"/>
    <property type="match status" value="1"/>
</dbReference>
<dbReference type="PANTHER" id="PTHR43032">
    <property type="entry name" value="PROTEIN-METHIONINE-SULFOXIDE REDUCTASE"/>
    <property type="match status" value="1"/>
</dbReference>
<dbReference type="Pfam" id="PF00174">
    <property type="entry name" value="Oxidored_molyb"/>
    <property type="match status" value="1"/>
</dbReference>
<dbReference type="SUPFAM" id="SSF56524">
    <property type="entry name" value="Oxidoreductase molybdopterin-binding domain"/>
    <property type="match status" value="1"/>
</dbReference>